<gene>
    <name evidence="1" type="primary">rpsC</name>
    <name type="ordered locus">Nham_1551</name>
</gene>
<organism>
    <name type="scientific">Nitrobacter hamburgensis (strain DSM 10229 / NCIMB 13809 / X14)</name>
    <dbReference type="NCBI Taxonomy" id="323097"/>
    <lineage>
        <taxon>Bacteria</taxon>
        <taxon>Pseudomonadati</taxon>
        <taxon>Pseudomonadota</taxon>
        <taxon>Alphaproteobacteria</taxon>
        <taxon>Hyphomicrobiales</taxon>
        <taxon>Nitrobacteraceae</taxon>
        <taxon>Nitrobacter</taxon>
    </lineage>
</organism>
<keyword id="KW-1185">Reference proteome</keyword>
<keyword id="KW-0687">Ribonucleoprotein</keyword>
<keyword id="KW-0689">Ribosomal protein</keyword>
<keyword id="KW-0694">RNA-binding</keyword>
<keyword id="KW-0699">rRNA-binding</keyword>
<comment type="function">
    <text evidence="1">Binds the lower part of the 30S subunit head. Binds mRNA in the 70S ribosome, positioning it for translation.</text>
</comment>
<comment type="subunit">
    <text evidence="1">Part of the 30S ribosomal subunit. Forms a tight complex with proteins S10 and S14.</text>
</comment>
<comment type="similarity">
    <text evidence="1">Belongs to the universal ribosomal protein uS3 family.</text>
</comment>
<reference key="1">
    <citation type="submission" date="2006-03" db="EMBL/GenBank/DDBJ databases">
        <title>Complete sequence of chromosome of Nitrobacter hamburgensis X14.</title>
        <authorList>
            <consortium name="US DOE Joint Genome Institute"/>
            <person name="Copeland A."/>
            <person name="Lucas S."/>
            <person name="Lapidus A."/>
            <person name="Barry K."/>
            <person name="Detter J.C."/>
            <person name="Glavina del Rio T."/>
            <person name="Hammon N."/>
            <person name="Israni S."/>
            <person name="Dalin E."/>
            <person name="Tice H."/>
            <person name="Pitluck S."/>
            <person name="Chain P."/>
            <person name="Malfatti S."/>
            <person name="Shin M."/>
            <person name="Vergez L."/>
            <person name="Schmutz J."/>
            <person name="Larimer F."/>
            <person name="Land M."/>
            <person name="Hauser L."/>
            <person name="Kyrpides N."/>
            <person name="Ivanova N."/>
            <person name="Ward B."/>
            <person name="Arp D."/>
            <person name="Klotz M."/>
            <person name="Stein L."/>
            <person name="O'Mullan G."/>
            <person name="Starkenburg S."/>
            <person name="Sayavedra L."/>
            <person name="Poret-Peterson A.T."/>
            <person name="Gentry M.E."/>
            <person name="Bruce D."/>
            <person name="Richardson P."/>
        </authorList>
    </citation>
    <scope>NUCLEOTIDE SEQUENCE [LARGE SCALE GENOMIC DNA]</scope>
    <source>
        <strain>DSM 10229 / NCIMB 13809 / X14</strain>
    </source>
</reference>
<evidence type="ECO:0000255" key="1">
    <source>
        <dbReference type="HAMAP-Rule" id="MF_01309"/>
    </source>
</evidence>
<evidence type="ECO:0000305" key="2"/>
<protein>
    <recommendedName>
        <fullName evidence="1">Small ribosomal subunit protein uS3</fullName>
    </recommendedName>
    <alternativeName>
        <fullName evidence="2">30S ribosomal protein S3</fullName>
    </alternativeName>
</protein>
<accession>Q1QN24</accession>
<feature type="chain" id="PRO_0000293840" description="Small ribosomal subunit protein uS3">
    <location>
        <begin position="1"/>
        <end position="231"/>
    </location>
</feature>
<feature type="domain" description="KH type-2" evidence="1">
    <location>
        <begin position="39"/>
        <end position="107"/>
    </location>
</feature>
<dbReference type="EMBL" id="CP000319">
    <property type="protein sequence ID" value="ABE62373.1"/>
    <property type="molecule type" value="Genomic_DNA"/>
</dbReference>
<dbReference type="RefSeq" id="WP_011510060.1">
    <property type="nucleotide sequence ID" value="NC_007964.1"/>
</dbReference>
<dbReference type="SMR" id="Q1QN24"/>
<dbReference type="STRING" id="323097.Nham_1551"/>
<dbReference type="KEGG" id="nha:Nham_1551"/>
<dbReference type="eggNOG" id="COG0092">
    <property type="taxonomic scope" value="Bacteria"/>
</dbReference>
<dbReference type="HOGENOM" id="CLU_058591_0_2_5"/>
<dbReference type="OrthoDB" id="9806396at2"/>
<dbReference type="Proteomes" id="UP000001953">
    <property type="component" value="Chromosome"/>
</dbReference>
<dbReference type="GO" id="GO:0022627">
    <property type="term" value="C:cytosolic small ribosomal subunit"/>
    <property type="evidence" value="ECO:0007669"/>
    <property type="project" value="TreeGrafter"/>
</dbReference>
<dbReference type="GO" id="GO:0003729">
    <property type="term" value="F:mRNA binding"/>
    <property type="evidence" value="ECO:0007669"/>
    <property type="project" value="UniProtKB-UniRule"/>
</dbReference>
<dbReference type="GO" id="GO:0019843">
    <property type="term" value="F:rRNA binding"/>
    <property type="evidence" value="ECO:0007669"/>
    <property type="project" value="UniProtKB-UniRule"/>
</dbReference>
<dbReference type="GO" id="GO:0003735">
    <property type="term" value="F:structural constituent of ribosome"/>
    <property type="evidence" value="ECO:0007669"/>
    <property type="project" value="InterPro"/>
</dbReference>
<dbReference type="GO" id="GO:0006412">
    <property type="term" value="P:translation"/>
    <property type="evidence" value="ECO:0007669"/>
    <property type="project" value="UniProtKB-UniRule"/>
</dbReference>
<dbReference type="CDD" id="cd02412">
    <property type="entry name" value="KH-II_30S_S3"/>
    <property type="match status" value="1"/>
</dbReference>
<dbReference type="FunFam" id="3.30.1140.32:FF:000009">
    <property type="entry name" value="30S ribosomal protein S3"/>
    <property type="match status" value="1"/>
</dbReference>
<dbReference type="FunFam" id="3.30.300.20:FF:000001">
    <property type="entry name" value="30S ribosomal protein S3"/>
    <property type="match status" value="1"/>
</dbReference>
<dbReference type="Gene3D" id="3.30.300.20">
    <property type="match status" value="1"/>
</dbReference>
<dbReference type="Gene3D" id="3.30.1140.32">
    <property type="entry name" value="Ribosomal protein S3, C-terminal domain"/>
    <property type="match status" value="1"/>
</dbReference>
<dbReference type="HAMAP" id="MF_01309_B">
    <property type="entry name" value="Ribosomal_uS3_B"/>
    <property type="match status" value="1"/>
</dbReference>
<dbReference type="InterPro" id="IPR004087">
    <property type="entry name" value="KH_dom"/>
</dbReference>
<dbReference type="InterPro" id="IPR015946">
    <property type="entry name" value="KH_dom-like_a/b"/>
</dbReference>
<dbReference type="InterPro" id="IPR004044">
    <property type="entry name" value="KH_dom_type_2"/>
</dbReference>
<dbReference type="InterPro" id="IPR009019">
    <property type="entry name" value="KH_sf_prok-type"/>
</dbReference>
<dbReference type="InterPro" id="IPR036419">
    <property type="entry name" value="Ribosomal_S3_C_sf"/>
</dbReference>
<dbReference type="InterPro" id="IPR005704">
    <property type="entry name" value="Ribosomal_uS3_bac-typ"/>
</dbReference>
<dbReference type="InterPro" id="IPR001351">
    <property type="entry name" value="Ribosomal_uS3_C"/>
</dbReference>
<dbReference type="InterPro" id="IPR018280">
    <property type="entry name" value="Ribosomal_uS3_CS"/>
</dbReference>
<dbReference type="NCBIfam" id="TIGR01009">
    <property type="entry name" value="rpsC_bact"/>
    <property type="match status" value="1"/>
</dbReference>
<dbReference type="PANTHER" id="PTHR11760">
    <property type="entry name" value="30S/40S RIBOSOMAL PROTEIN S3"/>
    <property type="match status" value="1"/>
</dbReference>
<dbReference type="PANTHER" id="PTHR11760:SF19">
    <property type="entry name" value="SMALL RIBOSOMAL SUBUNIT PROTEIN US3C"/>
    <property type="match status" value="1"/>
</dbReference>
<dbReference type="Pfam" id="PF07650">
    <property type="entry name" value="KH_2"/>
    <property type="match status" value="1"/>
</dbReference>
<dbReference type="Pfam" id="PF00189">
    <property type="entry name" value="Ribosomal_S3_C"/>
    <property type="match status" value="1"/>
</dbReference>
<dbReference type="SMART" id="SM00322">
    <property type="entry name" value="KH"/>
    <property type="match status" value="1"/>
</dbReference>
<dbReference type="SUPFAM" id="SSF54814">
    <property type="entry name" value="Prokaryotic type KH domain (KH-domain type II)"/>
    <property type="match status" value="1"/>
</dbReference>
<dbReference type="SUPFAM" id="SSF54821">
    <property type="entry name" value="Ribosomal protein S3 C-terminal domain"/>
    <property type="match status" value="1"/>
</dbReference>
<dbReference type="PROSITE" id="PS50823">
    <property type="entry name" value="KH_TYPE_2"/>
    <property type="match status" value="1"/>
</dbReference>
<dbReference type="PROSITE" id="PS00548">
    <property type="entry name" value="RIBOSOMAL_S3"/>
    <property type="match status" value="1"/>
</dbReference>
<proteinExistence type="inferred from homology"/>
<name>RS3_NITHX</name>
<sequence length="231" mass="26093">MGQKINPIGLRLGINRTWDSRWYAGKNEYGRLLHEDVRIRELLHKELKQAAVARIVIERPHKKCRVTIHSARPGVVIGKKGADIDKLRKRVADITSSDVVINIVEIRKPELDATLVAESIAQQLERRVAFRRAMKRAVQSAMRLGAEGIRINCSGRLGGAEIARMEWYREGRVPLHTLRADVDYGVATAFTTFGTCGVKVWIFKGEILEHDPMAQDKRLAGDDNRPRRDAA</sequence>